<geneLocation type="chloroplast"/>
<reference key="1">
    <citation type="journal article" date="2007" name="Mol. Genet. Genomics">
        <title>Chloroplast genomes of the diatoms Phaeodactylum tricornutum and Thalassiosira pseudonana: comparison with other plastid genomes of the red lineage.</title>
        <authorList>
            <person name="Oudot-Le Secq M.-P."/>
            <person name="Grimwood J."/>
            <person name="Shapiro H."/>
            <person name="Armbrust E.V."/>
            <person name="Bowler C."/>
            <person name="Green B.R."/>
        </authorList>
    </citation>
    <scope>NUCLEOTIDE SEQUENCE [LARGE SCALE GENOMIC DNA]</scope>
    <source>
        <strain>CCAP 1055/1</strain>
    </source>
</reference>
<organism>
    <name type="scientific">Phaeodactylum tricornutum (strain CCAP 1055/1)</name>
    <dbReference type="NCBI Taxonomy" id="556484"/>
    <lineage>
        <taxon>Eukaryota</taxon>
        <taxon>Sar</taxon>
        <taxon>Stramenopiles</taxon>
        <taxon>Ochrophyta</taxon>
        <taxon>Bacillariophyta</taxon>
        <taxon>Bacillariophyceae</taxon>
        <taxon>Bacillariophycidae</taxon>
        <taxon>Naviculales</taxon>
        <taxon>Phaeodactylaceae</taxon>
        <taxon>Phaeodactylum</taxon>
    </lineage>
</organism>
<dbReference type="EC" id="3.6.5.3" evidence="2"/>
<dbReference type="EMBL" id="EF067920">
    <property type="protein sequence ID" value="ABK20704.1"/>
    <property type="molecule type" value="Genomic_DNA"/>
</dbReference>
<dbReference type="RefSeq" id="YP_874481.1">
    <property type="nucleotide sequence ID" value="NC_008588.1"/>
</dbReference>
<dbReference type="SMR" id="A0T0K6"/>
<dbReference type="FunCoup" id="A0T0K6">
    <property type="interactions" value="340"/>
</dbReference>
<dbReference type="STRING" id="556484.A0T0K6"/>
<dbReference type="GeneID" id="4524682"/>
<dbReference type="InParanoid" id="A0T0K6"/>
<dbReference type="Proteomes" id="UP000000759">
    <property type="component" value="Chloroplast"/>
</dbReference>
<dbReference type="GO" id="GO:0009507">
    <property type="term" value="C:chloroplast"/>
    <property type="evidence" value="ECO:0007669"/>
    <property type="project" value="UniProtKB-SubCell"/>
</dbReference>
<dbReference type="GO" id="GO:0005829">
    <property type="term" value="C:cytosol"/>
    <property type="evidence" value="ECO:0007669"/>
    <property type="project" value="TreeGrafter"/>
</dbReference>
<dbReference type="GO" id="GO:0005525">
    <property type="term" value="F:GTP binding"/>
    <property type="evidence" value="ECO:0007669"/>
    <property type="project" value="UniProtKB-UniRule"/>
</dbReference>
<dbReference type="GO" id="GO:0003924">
    <property type="term" value="F:GTPase activity"/>
    <property type="evidence" value="ECO:0007669"/>
    <property type="project" value="InterPro"/>
</dbReference>
<dbReference type="GO" id="GO:0003746">
    <property type="term" value="F:translation elongation factor activity"/>
    <property type="evidence" value="ECO:0007669"/>
    <property type="project" value="UniProtKB-UniRule"/>
</dbReference>
<dbReference type="CDD" id="cd01884">
    <property type="entry name" value="EF_Tu"/>
    <property type="match status" value="1"/>
</dbReference>
<dbReference type="CDD" id="cd03697">
    <property type="entry name" value="EFTU_II"/>
    <property type="match status" value="1"/>
</dbReference>
<dbReference type="CDD" id="cd03707">
    <property type="entry name" value="EFTU_III"/>
    <property type="match status" value="1"/>
</dbReference>
<dbReference type="FunFam" id="2.40.30.10:FF:000001">
    <property type="entry name" value="Elongation factor Tu"/>
    <property type="match status" value="1"/>
</dbReference>
<dbReference type="FunFam" id="3.40.50.300:FF:000003">
    <property type="entry name" value="Elongation factor Tu"/>
    <property type="match status" value="1"/>
</dbReference>
<dbReference type="Gene3D" id="3.40.50.300">
    <property type="entry name" value="P-loop containing nucleotide triphosphate hydrolases"/>
    <property type="match status" value="1"/>
</dbReference>
<dbReference type="Gene3D" id="2.40.30.10">
    <property type="entry name" value="Translation factors"/>
    <property type="match status" value="2"/>
</dbReference>
<dbReference type="HAMAP" id="MF_00118_B">
    <property type="entry name" value="EF_Tu_B"/>
    <property type="match status" value="1"/>
</dbReference>
<dbReference type="InterPro" id="IPR041709">
    <property type="entry name" value="EF-Tu_GTP-bd"/>
</dbReference>
<dbReference type="InterPro" id="IPR050055">
    <property type="entry name" value="EF-Tu_GTPase"/>
</dbReference>
<dbReference type="InterPro" id="IPR004161">
    <property type="entry name" value="EFTu-like_2"/>
</dbReference>
<dbReference type="InterPro" id="IPR033720">
    <property type="entry name" value="EFTU_2"/>
</dbReference>
<dbReference type="InterPro" id="IPR031157">
    <property type="entry name" value="G_TR_CS"/>
</dbReference>
<dbReference type="InterPro" id="IPR027417">
    <property type="entry name" value="P-loop_NTPase"/>
</dbReference>
<dbReference type="InterPro" id="IPR005225">
    <property type="entry name" value="Small_GTP-bd"/>
</dbReference>
<dbReference type="InterPro" id="IPR000795">
    <property type="entry name" value="T_Tr_GTP-bd_dom"/>
</dbReference>
<dbReference type="InterPro" id="IPR009000">
    <property type="entry name" value="Transl_B-barrel_sf"/>
</dbReference>
<dbReference type="InterPro" id="IPR009001">
    <property type="entry name" value="Transl_elong_EF1A/Init_IF2_C"/>
</dbReference>
<dbReference type="InterPro" id="IPR004541">
    <property type="entry name" value="Transl_elong_EFTu/EF1A_bac/org"/>
</dbReference>
<dbReference type="InterPro" id="IPR004160">
    <property type="entry name" value="Transl_elong_EFTu/EF1A_C"/>
</dbReference>
<dbReference type="NCBIfam" id="TIGR00485">
    <property type="entry name" value="EF-Tu"/>
    <property type="match status" value="1"/>
</dbReference>
<dbReference type="NCBIfam" id="NF000766">
    <property type="entry name" value="PRK00049.1"/>
    <property type="match status" value="1"/>
</dbReference>
<dbReference type="NCBIfam" id="NF009372">
    <property type="entry name" value="PRK12735.1"/>
    <property type="match status" value="1"/>
</dbReference>
<dbReference type="NCBIfam" id="NF009373">
    <property type="entry name" value="PRK12736.1"/>
    <property type="match status" value="1"/>
</dbReference>
<dbReference type="NCBIfam" id="TIGR00231">
    <property type="entry name" value="small_GTP"/>
    <property type="match status" value="1"/>
</dbReference>
<dbReference type="PANTHER" id="PTHR43721:SF22">
    <property type="entry name" value="ELONGATION FACTOR TU, MITOCHONDRIAL"/>
    <property type="match status" value="1"/>
</dbReference>
<dbReference type="PANTHER" id="PTHR43721">
    <property type="entry name" value="ELONGATION FACTOR TU-RELATED"/>
    <property type="match status" value="1"/>
</dbReference>
<dbReference type="Pfam" id="PF00009">
    <property type="entry name" value="GTP_EFTU"/>
    <property type="match status" value="1"/>
</dbReference>
<dbReference type="Pfam" id="PF03144">
    <property type="entry name" value="GTP_EFTU_D2"/>
    <property type="match status" value="1"/>
</dbReference>
<dbReference type="Pfam" id="PF03143">
    <property type="entry name" value="GTP_EFTU_D3"/>
    <property type="match status" value="1"/>
</dbReference>
<dbReference type="PRINTS" id="PR00315">
    <property type="entry name" value="ELONGATNFCT"/>
</dbReference>
<dbReference type="SUPFAM" id="SSF50465">
    <property type="entry name" value="EF-Tu/eEF-1alpha/eIF2-gamma C-terminal domain"/>
    <property type="match status" value="1"/>
</dbReference>
<dbReference type="SUPFAM" id="SSF52540">
    <property type="entry name" value="P-loop containing nucleoside triphosphate hydrolases"/>
    <property type="match status" value="1"/>
</dbReference>
<dbReference type="SUPFAM" id="SSF50447">
    <property type="entry name" value="Translation proteins"/>
    <property type="match status" value="1"/>
</dbReference>
<dbReference type="PROSITE" id="PS00301">
    <property type="entry name" value="G_TR_1"/>
    <property type="match status" value="1"/>
</dbReference>
<dbReference type="PROSITE" id="PS51722">
    <property type="entry name" value="G_TR_2"/>
    <property type="match status" value="1"/>
</dbReference>
<feature type="chain" id="PRO_0000275383" description="Elongation factor Tu, chloroplastic">
    <location>
        <begin position="1"/>
        <end position="409"/>
    </location>
</feature>
<feature type="domain" description="tr-type G">
    <location>
        <begin position="10"/>
        <end position="214"/>
    </location>
</feature>
<feature type="region of interest" description="G1" evidence="1">
    <location>
        <begin position="19"/>
        <end position="26"/>
    </location>
</feature>
<feature type="region of interest" description="G2" evidence="1">
    <location>
        <begin position="60"/>
        <end position="64"/>
    </location>
</feature>
<feature type="region of interest" description="G3" evidence="1">
    <location>
        <begin position="81"/>
        <end position="84"/>
    </location>
</feature>
<feature type="region of interest" description="G4" evidence="1">
    <location>
        <begin position="136"/>
        <end position="139"/>
    </location>
</feature>
<feature type="region of interest" description="G5" evidence="1">
    <location>
        <begin position="174"/>
        <end position="176"/>
    </location>
</feature>
<feature type="binding site" evidence="1">
    <location>
        <begin position="19"/>
        <end position="26"/>
    </location>
    <ligand>
        <name>GTP</name>
        <dbReference type="ChEBI" id="CHEBI:37565"/>
    </ligand>
</feature>
<feature type="binding site" evidence="2">
    <location>
        <position position="26"/>
    </location>
    <ligand>
        <name>Mg(2+)</name>
        <dbReference type="ChEBI" id="CHEBI:18420"/>
    </ligand>
</feature>
<feature type="binding site" evidence="1">
    <location>
        <begin position="81"/>
        <end position="85"/>
    </location>
    <ligand>
        <name>GTP</name>
        <dbReference type="ChEBI" id="CHEBI:37565"/>
    </ligand>
</feature>
<feature type="binding site" evidence="1">
    <location>
        <begin position="136"/>
        <end position="139"/>
    </location>
    <ligand>
        <name>GTP</name>
        <dbReference type="ChEBI" id="CHEBI:37565"/>
    </ligand>
</feature>
<evidence type="ECO:0000250" key="1"/>
<evidence type="ECO:0000255" key="2">
    <source>
        <dbReference type="HAMAP-Rule" id="MF_00118"/>
    </source>
</evidence>
<evidence type="ECO:0000305" key="3"/>
<gene>
    <name type="primary">tufA</name>
</gene>
<accession>A0T0K6</accession>
<keyword id="KW-0150">Chloroplast</keyword>
<keyword id="KW-0251">Elongation factor</keyword>
<keyword id="KW-0342">GTP-binding</keyword>
<keyword id="KW-0378">Hydrolase</keyword>
<keyword id="KW-0460">Magnesium</keyword>
<keyword id="KW-0479">Metal-binding</keyword>
<keyword id="KW-0547">Nucleotide-binding</keyword>
<keyword id="KW-0934">Plastid</keyword>
<keyword id="KW-0648">Protein biosynthesis</keyword>
<keyword id="KW-1185">Reference proteome</keyword>
<protein>
    <recommendedName>
        <fullName>Elongation factor Tu, chloroplastic</fullName>
        <shortName>EF-Tu</shortName>
        <ecNumber evidence="2">3.6.5.3</ecNumber>
    </recommendedName>
</protein>
<comment type="function">
    <text evidence="2">GTP hydrolase that promotes the GTP-dependent binding of aminoacyl-tRNA to the A-site of ribosomes during protein biosynthesis.</text>
</comment>
<comment type="catalytic activity">
    <reaction evidence="2">
        <text>GTP + H2O = GDP + phosphate + H(+)</text>
        <dbReference type="Rhea" id="RHEA:19669"/>
        <dbReference type="ChEBI" id="CHEBI:15377"/>
        <dbReference type="ChEBI" id="CHEBI:15378"/>
        <dbReference type="ChEBI" id="CHEBI:37565"/>
        <dbReference type="ChEBI" id="CHEBI:43474"/>
        <dbReference type="ChEBI" id="CHEBI:58189"/>
        <dbReference type="EC" id="3.6.5.3"/>
    </reaction>
    <physiologicalReaction direction="left-to-right" evidence="2">
        <dbReference type="Rhea" id="RHEA:19670"/>
    </physiologicalReaction>
</comment>
<comment type="subcellular location">
    <subcellularLocation>
        <location>Plastid</location>
        <location>Chloroplast</location>
    </subcellularLocation>
</comment>
<comment type="similarity">
    <text evidence="3">Belongs to the TRAFAC class translation factor GTPase superfamily. Classic translation factor GTPase family. EF-Tu/EF-1A subfamily.</text>
</comment>
<name>EFTU_PHATC</name>
<proteinExistence type="inferred from homology"/>
<sequence>MAREKFERTKPHVNIGTIGHVDHGKTTLTAAITATLALDGGAQAKAYADIDGAPEERARGITINTAHVEYETKDRHYAHVDCPGHADYVKNMITGAAQMDGAILVVSAADGPMPQTREHILLSKQVGVPNIVVFLNKEDQVDDEELLELVELEVRELLSAYDFPGDDIPICPGSALQAIEAITANPTVKRGDNKWVDKIYALMDAVDEYIPTPERDVEKTFLMAIEDVFSITGRGTVATGRIERGVVKVGENVEIVGVTDTQTTTITGIEMFQKTLEEGFAGDNVGILLRGVTRENIERGMVLAKPGTITPHTSFESEVYVLTKDEGGRHTPFFTGYRPQFYVRTTDVTGSITQFTADDGSVVEMVMPGDRIKMTAEFIYPVAIEAGMRFAIREGGRTIGAGVVSKIVK</sequence>